<comment type="function">
    <text evidence="1">One of the primary rRNA binding proteins, it binds directly near the 3'-end of the 23S rRNA, where it nucleates assembly of the 50S subunit.</text>
</comment>
<comment type="subunit">
    <text evidence="1">Part of the 50S ribosomal subunit. Forms a cluster with proteins L14 and L19.</text>
</comment>
<comment type="PTM">
    <text evidence="1">Methylated by PrmB.</text>
</comment>
<comment type="similarity">
    <text evidence="1">Belongs to the universal ribosomal protein uL3 family.</text>
</comment>
<sequence>MEKTMSNSTSTPAAHRLGLVGRKVGMTRIFTEEGESIPVTVLDVSNNRVTQIKSLEADGYAAVQVAYGTRRASRVAQPQTGHYAKAGTEAGSILKEFRLDPARLAEFTPGAVIAVESVFEAGQQVDVTGTTIGKGFAGTIKRHHFGSQRASHGNSRSHRVPGSIGQAQDPGRIFPGKRMSGHLGDVTRTVQNLDVVRVDAERGLLLVKGAVPGHAGGDVVVRPAIKAPAKKGA</sequence>
<dbReference type="EMBL" id="AM902716">
    <property type="protein sequence ID" value="CAP45304.1"/>
    <property type="molecule type" value="Genomic_DNA"/>
</dbReference>
<dbReference type="SMR" id="A9IJ01"/>
<dbReference type="STRING" id="94624.Bpet4952"/>
<dbReference type="KEGG" id="bpt:Bpet4952"/>
<dbReference type="eggNOG" id="COG0087">
    <property type="taxonomic scope" value="Bacteria"/>
</dbReference>
<dbReference type="Proteomes" id="UP000001225">
    <property type="component" value="Chromosome"/>
</dbReference>
<dbReference type="GO" id="GO:0022625">
    <property type="term" value="C:cytosolic large ribosomal subunit"/>
    <property type="evidence" value="ECO:0007669"/>
    <property type="project" value="TreeGrafter"/>
</dbReference>
<dbReference type="GO" id="GO:0019843">
    <property type="term" value="F:rRNA binding"/>
    <property type="evidence" value="ECO:0007669"/>
    <property type="project" value="UniProtKB-UniRule"/>
</dbReference>
<dbReference type="GO" id="GO:0003735">
    <property type="term" value="F:structural constituent of ribosome"/>
    <property type="evidence" value="ECO:0007669"/>
    <property type="project" value="InterPro"/>
</dbReference>
<dbReference type="GO" id="GO:0006412">
    <property type="term" value="P:translation"/>
    <property type="evidence" value="ECO:0007669"/>
    <property type="project" value="UniProtKB-UniRule"/>
</dbReference>
<dbReference type="FunFam" id="2.40.30.10:FF:000004">
    <property type="entry name" value="50S ribosomal protein L3"/>
    <property type="match status" value="1"/>
</dbReference>
<dbReference type="FunFam" id="3.30.160.810:FF:000001">
    <property type="entry name" value="50S ribosomal protein L3"/>
    <property type="match status" value="1"/>
</dbReference>
<dbReference type="Gene3D" id="3.30.160.810">
    <property type="match status" value="1"/>
</dbReference>
<dbReference type="Gene3D" id="2.40.30.10">
    <property type="entry name" value="Translation factors"/>
    <property type="match status" value="1"/>
</dbReference>
<dbReference type="HAMAP" id="MF_01325_B">
    <property type="entry name" value="Ribosomal_uL3_B"/>
    <property type="match status" value="1"/>
</dbReference>
<dbReference type="InterPro" id="IPR000597">
    <property type="entry name" value="Ribosomal_uL3"/>
</dbReference>
<dbReference type="InterPro" id="IPR019927">
    <property type="entry name" value="Ribosomal_uL3_bac/org-type"/>
</dbReference>
<dbReference type="InterPro" id="IPR019926">
    <property type="entry name" value="Ribosomal_uL3_CS"/>
</dbReference>
<dbReference type="InterPro" id="IPR009000">
    <property type="entry name" value="Transl_B-barrel_sf"/>
</dbReference>
<dbReference type="NCBIfam" id="TIGR03625">
    <property type="entry name" value="L3_bact"/>
    <property type="match status" value="1"/>
</dbReference>
<dbReference type="PANTHER" id="PTHR11229">
    <property type="entry name" value="50S RIBOSOMAL PROTEIN L3"/>
    <property type="match status" value="1"/>
</dbReference>
<dbReference type="PANTHER" id="PTHR11229:SF16">
    <property type="entry name" value="LARGE RIBOSOMAL SUBUNIT PROTEIN UL3C"/>
    <property type="match status" value="1"/>
</dbReference>
<dbReference type="Pfam" id="PF00297">
    <property type="entry name" value="Ribosomal_L3"/>
    <property type="match status" value="1"/>
</dbReference>
<dbReference type="SUPFAM" id="SSF50447">
    <property type="entry name" value="Translation proteins"/>
    <property type="match status" value="1"/>
</dbReference>
<dbReference type="PROSITE" id="PS00474">
    <property type="entry name" value="RIBOSOMAL_L3"/>
    <property type="match status" value="1"/>
</dbReference>
<gene>
    <name evidence="1" type="primary">rplC</name>
    <name type="ordered locus">Bpet4952</name>
</gene>
<keyword id="KW-0488">Methylation</keyword>
<keyword id="KW-0687">Ribonucleoprotein</keyword>
<keyword id="KW-0689">Ribosomal protein</keyword>
<keyword id="KW-0694">RNA-binding</keyword>
<keyword id="KW-0699">rRNA-binding</keyword>
<organism>
    <name type="scientific">Bordetella petrii (strain ATCC BAA-461 / DSM 12804 / CCUG 43448)</name>
    <dbReference type="NCBI Taxonomy" id="340100"/>
    <lineage>
        <taxon>Bacteria</taxon>
        <taxon>Pseudomonadati</taxon>
        <taxon>Pseudomonadota</taxon>
        <taxon>Betaproteobacteria</taxon>
        <taxon>Burkholderiales</taxon>
        <taxon>Alcaligenaceae</taxon>
        <taxon>Bordetella</taxon>
    </lineage>
</organism>
<evidence type="ECO:0000255" key="1">
    <source>
        <dbReference type="HAMAP-Rule" id="MF_01325"/>
    </source>
</evidence>
<evidence type="ECO:0000256" key="2">
    <source>
        <dbReference type="SAM" id="MobiDB-lite"/>
    </source>
</evidence>
<evidence type="ECO:0000305" key="3"/>
<feature type="chain" id="PRO_0000353594" description="Large ribosomal subunit protein uL3">
    <location>
        <begin position="1"/>
        <end position="233"/>
    </location>
</feature>
<feature type="region of interest" description="Disordered" evidence="2">
    <location>
        <begin position="145"/>
        <end position="172"/>
    </location>
</feature>
<feature type="modified residue" description="N5-methylglutamine" evidence="1">
    <location>
        <position position="168"/>
    </location>
</feature>
<accession>A9IJ01</accession>
<protein>
    <recommendedName>
        <fullName evidence="1">Large ribosomal subunit protein uL3</fullName>
    </recommendedName>
    <alternativeName>
        <fullName evidence="3">50S ribosomal protein L3</fullName>
    </alternativeName>
</protein>
<proteinExistence type="inferred from homology"/>
<reference key="1">
    <citation type="journal article" date="2008" name="BMC Genomics">
        <title>The missing link: Bordetella petrii is endowed with both the metabolic versatility of environmental bacteria and virulence traits of pathogenic Bordetellae.</title>
        <authorList>
            <person name="Gross R."/>
            <person name="Guzman C.A."/>
            <person name="Sebaihia M."/>
            <person name="Martin dos Santos V.A.P."/>
            <person name="Pieper D.H."/>
            <person name="Koebnik R."/>
            <person name="Lechner M."/>
            <person name="Bartels D."/>
            <person name="Buhrmester J."/>
            <person name="Choudhuri J.V."/>
            <person name="Ebensen T."/>
            <person name="Gaigalat L."/>
            <person name="Herrmann S."/>
            <person name="Khachane A.N."/>
            <person name="Larisch C."/>
            <person name="Link S."/>
            <person name="Linke B."/>
            <person name="Meyer F."/>
            <person name="Mormann S."/>
            <person name="Nakunst D."/>
            <person name="Rueckert C."/>
            <person name="Schneiker-Bekel S."/>
            <person name="Schulze K."/>
            <person name="Voerholter F.-J."/>
            <person name="Yevsa T."/>
            <person name="Engle J.T."/>
            <person name="Goldman W.E."/>
            <person name="Puehler A."/>
            <person name="Goebel U.B."/>
            <person name="Goesmann A."/>
            <person name="Bloecker H."/>
            <person name="Kaiser O."/>
            <person name="Martinez-Arias R."/>
        </authorList>
    </citation>
    <scope>NUCLEOTIDE SEQUENCE [LARGE SCALE GENOMIC DNA]</scope>
    <source>
        <strain>ATCC BAA-461 / DSM 12804 / CCUG 43448</strain>
    </source>
</reference>
<name>RL3_BORPD</name>